<organism>
    <name type="scientific">Pyrobaculum calidifontis (strain DSM 21063 / JCM 11548 / VA1)</name>
    <dbReference type="NCBI Taxonomy" id="410359"/>
    <lineage>
        <taxon>Archaea</taxon>
        <taxon>Thermoproteota</taxon>
        <taxon>Thermoprotei</taxon>
        <taxon>Thermoproteales</taxon>
        <taxon>Thermoproteaceae</taxon>
        <taxon>Pyrobaculum</taxon>
    </lineage>
</organism>
<accession>A3MWE7</accession>
<gene>
    <name type="ordered locus">Pcal_1546</name>
</gene>
<name>Y1546_PYRCJ</name>
<sequence>MEIVPVGEESLGVRSMCLYVETRDLRILLDAGVSLAPRRFGLPPHPLELQRAREVREQILRLAAYADVVTISHYHRDHFTVPYPSQYMATDSETYKAVYGEKTVLAKSPHDLNWSQRRRHYGLAKALDGVATVVYADGGEWRFGTTVVRASGPLWHGPAGSKTGRVIAFAVSDGEETLAFIPDVEGPVEEEAVHFAEEVKPTVVVVGGPPTYLGWDLASAVSNLKRIVDLRPRLLVLAHHLLRDVQWREKVGEVLQYAERRGVEVATYAKLAGREEQLLEARRRELYGETGRGEEAGEEEE</sequence>
<evidence type="ECO:0000255" key="1">
    <source>
        <dbReference type="HAMAP-Rule" id="MF_01406"/>
    </source>
</evidence>
<dbReference type="EMBL" id="CP000561">
    <property type="protein sequence ID" value="ABO08964.1"/>
    <property type="molecule type" value="Genomic_DNA"/>
</dbReference>
<dbReference type="RefSeq" id="WP_011850222.1">
    <property type="nucleotide sequence ID" value="NC_009073.1"/>
</dbReference>
<dbReference type="STRING" id="410359.Pcal_1546"/>
<dbReference type="GeneID" id="4910014"/>
<dbReference type="KEGG" id="pcl:Pcal_1546"/>
<dbReference type="eggNOG" id="arCOG00969">
    <property type="taxonomic scope" value="Archaea"/>
</dbReference>
<dbReference type="HOGENOM" id="CLU_079268_0_0_2"/>
<dbReference type="OrthoDB" id="21331at2157"/>
<dbReference type="Proteomes" id="UP000001431">
    <property type="component" value="Chromosome"/>
</dbReference>
<dbReference type="Gene3D" id="3.60.15.10">
    <property type="entry name" value="Ribonuclease Z/Hydroxyacylglutathione hydrolase-like"/>
    <property type="match status" value="1"/>
</dbReference>
<dbReference type="HAMAP" id="MF_01406">
    <property type="entry name" value="UPF0282"/>
    <property type="match status" value="1"/>
</dbReference>
<dbReference type="InterPro" id="IPR001279">
    <property type="entry name" value="Metallo-B-lactamas"/>
</dbReference>
<dbReference type="InterPro" id="IPR036866">
    <property type="entry name" value="RibonucZ/Hydroxyglut_hydro"/>
</dbReference>
<dbReference type="InterPro" id="IPR050114">
    <property type="entry name" value="UPF0173_UPF0282_UlaG_hydrolase"/>
</dbReference>
<dbReference type="InterPro" id="IPR014426">
    <property type="entry name" value="UPF0282_hydrls"/>
</dbReference>
<dbReference type="PANTHER" id="PTHR43546">
    <property type="entry name" value="UPF0173 METAL-DEPENDENT HYDROLASE MJ1163-RELATED"/>
    <property type="match status" value="1"/>
</dbReference>
<dbReference type="PANTHER" id="PTHR43546:SF4">
    <property type="entry name" value="UPF0282 PROTEIN MJ1629"/>
    <property type="match status" value="1"/>
</dbReference>
<dbReference type="Pfam" id="PF12706">
    <property type="entry name" value="Lactamase_B_2"/>
    <property type="match status" value="1"/>
</dbReference>
<dbReference type="PIRSF" id="PIRSF004944">
    <property type="entry name" value="UCP004944_hydrls"/>
    <property type="match status" value="1"/>
</dbReference>
<dbReference type="SUPFAM" id="SSF56281">
    <property type="entry name" value="Metallo-hydrolase/oxidoreductase"/>
    <property type="match status" value="1"/>
</dbReference>
<proteinExistence type="inferred from homology"/>
<feature type="chain" id="PRO_1000068436" description="UPF0282 protein Pcal_1546">
    <location>
        <begin position="1"/>
        <end position="301"/>
    </location>
</feature>
<comment type="similarity">
    <text evidence="1">Belongs to the UPF0282 family.</text>
</comment>
<protein>
    <recommendedName>
        <fullName evidence="1">UPF0282 protein Pcal_1546</fullName>
    </recommendedName>
</protein>
<reference key="1">
    <citation type="submission" date="2007-02" db="EMBL/GenBank/DDBJ databases">
        <title>Complete sequence of Pyrobaculum calidifontis JCM 11548.</title>
        <authorList>
            <consortium name="US DOE Joint Genome Institute"/>
            <person name="Copeland A."/>
            <person name="Lucas S."/>
            <person name="Lapidus A."/>
            <person name="Barry K."/>
            <person name="Glavina del Rio T."/>
            <person name="Dalin E."/>
            <person name="Tice H."/>
            <person name="Pitluck S."/>
            <person name="Chain P."/>
            <person name="Malfatti S."/>
            <person name="Shin M."/>
            <person name="Vergez L."/>
            <person name="Schmutz J."/>
            <person name="Larimer F."/>
            <person name="Land M."/>
            <person name="Hauser L."/>
            <person name="Kyrpides N."/>
            <person name="Mikhailova N."/>
            <person name="Cozen A.E."/>
            <person name="Fitz-Gibbon S.T."/>
            <person name="House C.H."/>
            <person name="Saltikov C."/>
            <person name="Lowe T.M."/>
            <person name="Richardson P."/>
        </authorList>
    </citation>
    <scope>NUCLEOTIDE SEQUENCE [LARGE SCALE GENOMIC DNA]</scope>
    <source>
        <strain>DSM 21063 / JCM 11548 / VA1</strain>
    </source>
</reference>